<evidence type="ECO:0000255" key="1">
    <source>
        <dbReference type="HAMAP-Rule" id="MF_00532"/>
    </source>
</evidence>
<evidence type="ECO:0000256" key="2">
    <source>
        <dbReference type="SAM" id="MobiDB-lite"/>
    </source>
</evidence>
<evidence type="ECO:0000305" key="3"/>
<feature type="chain" id="PRO_1000211847" description="Small ribosomal subunit protein uS9">
    <location>
        <begin position="1"/>
        <end position="143"/>
    </location>
</feature>
<feature type="region of interest" description="Disordered" evidence="2">
    <location>
        <begin position="118"/>
        <end position="143"/>
    </location>
</feature>
<feature type="compositionally biased region" description="Basic residues" evidence="2">
    <location>
        <begin position="127"/>
        <end position="143"/>
    </location>
</feature>
<proteinExistence type="inferred from homology"/>
<comment type="similarity">
    <text evidence="1">Belongs to the universal ribosomal protein uS9 family.</text>
</comment>
<dbReference type="EMBL" id="CP001463">
    <property type="protein sequence ID" value="ACS89411.1"/>
    <property type="molecule type" value="Genomic_DNA"/>
</dbReference>
<dbReference type="SMR" id="C6A1B6"/>
<dbReference type="STRING" id="604354.TSIB_0345"/>
<dbReference type="KEGG" id="tsi:TSIB_0345"/>
<dbReference type="eggNOG" id="arCOG04243">
    <property type="taxonomic scope" value="Archaea"/>
</dbReference>
<dbReference type="HOGENOM" id="CLU_046483_4_0_2"/>
<dbReference type="Proteomes" id="UP000009079">
    <property type="component" value="Chromosome"/>
</dbReference>
<dbReference type="GO" id="GO:0022627">
    <property type="term" value="C:cytosolic small ribosomal subunit"/>
    <property type="evidence" value="ECO:0007669"/>
    <property type="project" value="TreeGrafter"/>
</dbReference>
<dbReference type="GO" id="GO:0003723">
    <property type="term" value="F:RNA binding"/>
    <property type="evidence" value="ECO:0007669"/>
    <property type="project" value="TreeGrafter"/>
</dbReference>
<dbReference type="GO" id="GO:0003735">
    <property type="term" value="F:structural constituent of ribosome"/>
    <property type="evidence" value="ECO:0007669"/>
    <property type="project" value="InterPro"/>
</dbReference>
<dbReference type="GO" id="GO:0000462">
    <property type="term" value="P:maturation of SSU-rRNA from tricistronic rRNA transcript (SSU-rRNA, 5.8S rRNA, LSU-rRNA)"/>
    <property type="evidence" value="ECO:0007669"/>
    <property type="project" value="TreeGrafter"/>
</dbReference>
<dbReference type="GO" id="GO:0006412">
    <property type="term" value="P:translation"/>
    <property type="evidence" value="ECO:0007669"/>
    <property type="project" value="UniProtKB-UniRule"/>
</dbReference>
<dbReference type="FunFam" id="3.30.230.10:FF:000051">
    <property type="entry name" value="30S ribosomal protein S9"/>
    <property type="match status" value="1"/>
</dbReference>
<dbReference type="Gene3D" id="3.30.230.10">
    <property type="match status" value="1"/>
</dbReference>
<dbReference type="HAMAP" id="MF_00532_A">
    <property type="entry name" value="Ribosomal_uS9_A"/>
    <property type="match status" value="1"/>
</dbReference>
<dbReference type="InterPro" id="IPR020568">
    <property type="entry name" value="Ribosomal_Su5_D2-typ_SF"/>
</dbReference>
<dbReference type="InterPro" id="IPR000754">
    <property type="entry name" value="Ribosomal_uS9"/>
</dbReference>
<dbReference type="InterPro" id="IPR019958">
    <property type="entry name" value="Ribosomal_uS9_archaeal"/>
</dbReference>
<dbReference type="InterPro" id="IPR020574">
    <property type="entry name" value="Ribosomal_uS9_CS"/>
</dbReference>
<dbReference type="InterPro" id="IPR014721">
    <property type="entry name" value="Ribsml_uS5_D2-typ_fold_subgr"/>
</dbReference>
<dbReference type="NCBIfam" id="NF001749">
    <property type="entry name" value="PRK00474.1"/>
    <property type="match status" value="1"/>
</dbReference>
<dbReference type="NCBIfam" id="TIGR03627">
    <property type="entry name" value="uS9_arch"/>
    <property type="match status" value="1"/>
</dbReference>
<dbReference type="PANTHER" id="PTHR21569:SF16">
    <property type="entry name" value="RIBOSOMAL PROTEIN S16"/>
    <property type="match status" value="1"/>
</dbReference>
<dbReference type="PANTHER" id="PTHR21569">
    <property type="entry name" value="RIBOSOMAL PROTEIN S9"/>
    <property type="match status" value="1"/>
</dbReference>
<dbReference type="Pfam" id="PF00380">
    <property type="entry name" value="Ribosomal_S9"/>
    <property type="match status" value="1"/>
</dbReference>
<dbReference type="SUPFAM" id="SSF54211">
    <property type="entry name" value="Ribosomal protein S5 domain 2-like"/>
    <property type="match status" value="1"/>
</dbReference>
<dbReference type="PROSITE" id="PS00360">
    <property type="entry name" value="RIBOSOMAL_S9"/>
    <property type="match status" value="1"/>
</dbReference>
<sequence>MESSEVMIMRIIQTAGKRKSAVARATIKEGNGRVRVNYKPVEILEPEIARFTIMEPLVIAGEEILGKVDVDVKVEGGGFMGQAEAARIAIARALVEWTGDMNLKEKFMKYDRTMLVGDSRRTEPHKPNRSTKGPRAKRQKSYR</sequence>
<organism>
    <name type="scientific">Thermococcus sibiricus (strain DSM 12597 / MM 739)</name>
    <dbReference type="NCBI Taxonomy" id="604354"/>
    <lineage>
        <taxon>Archaea</taxon>
        <taxon>Methanobacteriati</taxon>
        <taxon>Methanobacteriota</taxon>
        <taxon>Thermococci</taxon>
        <taxon>Thermococcales</taxon>
        <taxon>Thermococcaceae</taxon>
        <taxon>Thermococcus</taxon>
    </lineage>
</organism>
<name>RS9_THESM</name>
<accession>C6A1B6</accession>
<keyword id="KW-1185">Reference proteome</keyword>
<keyword id="KW-0687">Ribonucleoprotein</keyword>
<keyword id="KW-0689">Ribosomal protein</keyword>
<protein>
    <recommendedName>
        <fullName evidence="1">Small ribosomal subunit protein uS9</fullName>
    </recommendedName>
    <alternativeName>
        <fullName evidence="3">30S ribosomal protein S9</fullName>
    </alternativeName>
</protein>
<reference key="1">
    <citation type="journal article" date="2009" name="Appl. Environ. Microbiol.">
        <title>Metabolic versatility and indigenous origin of the archaeon Thermococcus sibiricus, isolated from a siberian oil reservoir, as revealed by genome analysis.</title>
        <authorList>
            <person name="Mardanov A.V."/>
            <person name="Ravin N.V."/>
            <person name="Svetlitchnyi V.A."/>
            <person name="Beletsky A.V."/>
            <person name="Miroshnichenko M.L."/>
            <person name="Bonch-Osmolovskaya E.A."/>
            <person name="Skryabin K.G."/>
        </authorList>
    </citation>
    <scope>NUCLEOTIDE SEQUENCE [LARGE SCALE GENOMIC DNA]</scope>
    <source>
        <strain>DSM 12597 / MM 739</strain>
    </source>
</reference>
<gene>
    <name evidence="1" type="primary">rps9</name>
    <name type="ordered locus">TSIB_0345</name>
</gene>